<comment type="function">
    <text evidence="2">Key player in the regulation of energy balance and body weight control. Once released into the circulation, has central and peripheral effects by binding LEPR, found in many tissues, which results in the activation of several major signaling pathways.</text>
</comment>
<comment type="subcellular location">
    <subcellularLocation>
        <location evidence="3">Secreted</location>
    </subcellularLocation>
</comment>
<comment type="similarity">
    <text evidence="3">Belongs to the leptin family.</text>
</comment>
<accession>O93416</accession>
<name>LEP_MELGA</name>
<evidence type="ECO:0000250" key="1"/>
<evidence type="ECO:0000250" key="2">
    <source>
        <dbReference type="UniProtKB" id="P41159"/>
    </source>
</evidence>
<evidence type="ECO:0000305" key="3"/>
<gene>
    <name type="primary">LEP</name>
    <name type="synonym">OB</name>
</gene>
<protein>
    <recommendedName>
        <fullName>Leptin</fullName>
    </recommendedName>
    <alternativeName>
        <fullName>Obesity factor</fullName>
    </alternativeName>
</protein>
<organism>
    <name type="scientific">Meleagris gallopavo</name>
    <name type="common">Wild turkey</name>
    <dbReference type="NCBI Taxonomy" id="9103"/>
    <lineage>
        <taxon>Eukaryota</taxon>
        <taxon>Metazoa</taxon>
        <taxon>Chordata</taxon>
        <taxon>Craniata</taxon>
        <taxon>Vertebrata</taxon>
        <taxon>Euteleostomi</taxon>
        <taxon>Archelosauria</taxon>
        <taxon>Archosauria</taxon>
        <taxon>Dinosauria</taxon>
        <taxon>Saurischia</taxon>
        <taxon>Theropoda</taxon>
        <taxon>Coelurosauria</taxon>
        <taxon>Aves</taxon>
        <taxon>Neognathae</taxon>
        <taxon>Galloanserae</taxon>
        <taxon>Galliformes</taxon>
        <taxon>Phasianidae</taxon>
        <taxon>Meleagridinae</taxon>
        <taxon>Meleagris</taxon>
    </lineage>
</organism>
<feature type="chain" id="PRO_0000017693" description="Leptin">
    <location>
        <begin position="1"/>
        <end position="145"/>
    </location>
</feature>
<feature type="disulfide bond" evidence="1">
    <location>
        <begin position="95"/>
        <end position="145"/>
    </location>
</feature>
<feature type="non-terminal residue">
    <location>
        <position position="1"/>
    </location>
</feature>
<proteinExistence type="evidence at transcript level"/>
<keyword id="KW-1015">Disulfide bond</keyword>
<keyword id="KW-0550">Obesity</keyword>
<keyword id="KW-1185">Reference proteome</keyword>
<keyword id="KW-0964">Secreted</keyword>
<dbReference type="EMBL" id="AF082501">
    <property type="protein sequence ID" value="AAC32381.1"/>
    <property type="molecule type" value="mRNA"/>
</dbReference>
<dbReference type="SMR" id="O93416"/>
<dbReference type="FunCoup" id="O93416">
    <property type="interactions" value="23"/>
</dbReference>
<dbReference type="InParanoid" id="O93416"/>
<dbReference type="Proteomes" id="UP000001645">
    <property type="component" value="Unplaced"/>
</dbReference>
<dbReference type="GO" id="GO:0005615">
    <property type="term" value="C:extracellular space"/>
    <property type="evidence" value="ECO:0007669"/>
    <property type="project" value="TreeGrafter"/>
</dbReference>
<dbReference type="GO" id="GO:0005179">
    <property type="term" value="F:hormone activity"/>
    <property type="evidence" value="ECO:0007669"/>
    <property type="project" value="InterPro"/>
</dbReference>
<dbReference type="GO" id="GO:0051428">
    <property type="term" value="F:peptide hormone receptor binding"/>
    <property type="evidence" value="ECO:0007669"/>
    <property type="project" value="TreeGrafter"/>
</dbReference>
<dbReference type="GO" id="GO:0006112">
    <property type="term" value="P:energy reserve metabolic process"/>
    <property type="evidence" value="ECO:0007669"/>
    <property type="project" value="TreeGrafter"/>
</dbReference>
<dbReference type="GO" id="GO:0006629">
    <property type="term" value="P:lipid metabolic process"/>
    <property type="evidence" value="ECO:0007669"/>
    <property type="project" value="TreeGrafter"/>
</dbReference>
<dbReference type="GO" id="GO:0043066">
    <property type="term" value="P:negative regulation of apoptotic process"/>
    <property type="evidence" value="ECO:0000250"/>
    <property type="project" value="AgBase"/>
</dbReference>
<dbReference type="GO" id="GO:0038108">
    <property type="term" value="P:negative regulation of appetite by leptin-mediated signaling pathway"/>
    <property type="evidence" value="ECO:0007669"/>
    <property type="project" value="TreeGrafter"/>
</dbReference>
<dbReference type="GO" id="GO:0006909">
    <property type="term" value="P:phagocytosis"/>
    <property type="evidence" value="ECO:0000250"/>
    <property type="project" value="UniProtKB"/>
</dbReference>
<dbReference type="GO" id="GO:2000866">
    <property type="term" value="P:positive regulation of estradiol secretion"/>
    <property type="evidence" value="ECO:0000250"/>
    <property type="project" value="AgBase"/>
</dbReference>
<dbReference type="GO" id="GO:2000196">
    <property type="term" value="P:positive regulation of female gonad development"/>
    <property type="evidence" value="ECO:0000250"/>
    <property type="project" value="AgBase"/>
</dbReference>
<dbReference type="GO" id="GO:0032735">
    <property type="term" value="P:positive regulation of interleukin-12 production"/>
    <property type="evidence" value="ECO:0000250"/>
    <property type="project" value="UniProtKB"/>
</dbReference>
<dbReference type="GO" id="GO:0032755">
    <property type="term" value="P:positive regulation of interleukin-6 production"/>
    <property type="evidence" value="ECO:0000250"/>
    <property type="project" value="UniProtKB"/>
</dbReference>
<dbReference type="GO" id="GO:0033686">
    <property type="term" value="P:positive regulation of luteinizing hormone secretion"/>
    <property type="evidence" value="ECO:0000250"/>
    <property type="project" value="AgBase"/>
</dbReference>
<dbReference type="GO" id="GO:1900745">
    <property type="term" value="P:positive regulation of p38MAPK cascade"/>
    <property type="evidence" value="ECO:0007669"/>
    <property type="project" value="TreeGrafter"/>
</dbReference>
<dbReference type="GO" id="GO:0051897">
    <property type="term" value="P:positive regulation of phosphatidylinositol 3-kinase/protein kinase B signal transduction"/>
    <property type="evidence" value="ECO:0007669"/>
    <property type="project" value="TreeGrafter"/>
</dbReference>
<dbReference type="GO" id="GO:2000872">
    <property type="term" value="P:positive regulation of progesterone secretion"/>
    <property type="evidence" value="ECO:0000250"/>
    <property type="project" value="AgBase"/>
</dbReference>
<dbReference type="GO" id="GO:0046427">
    <property type="term" value="P:positive regulation of receptor signaling pathway via JAK-STAT"/>
    <property type="evidence" value="ECO:0007669"/>
    <property type="project" value="TreeGrafter"/>
</dbReference>
<dbReference type="GO" id="GO:0032008">
    <property type="term" value="P:positive regulation of TOR signaling"/>
    <property type="evidence" value="ECO:0007669"/>
    <property type="project" value="TreeGrafter"/>
</dbReference>
<dbReference type="GO" id="GO:0032760">
    <property type="term" value="P:positive regulation of tumor necrosis factor production"/>
    <property type="evidence" value="ECO:0000250"/>
    <property type="project" value="UniProtKB"/>
</dbReference>
<dbReference type="GO" id="GO:0032868">
    <property type="term" value="P:response to insulin"/>
    <property type="evidence" value="ECO:0007669"/>
    <property type="project" value="TreeGrafter"/>
</dbReference>
<dbReference type="FunFam" id="1.20.1250.10:FF:000008">
    <property type="entry name" value="Leptin"/>
    <property type="match status" value="1"/>
</dbReference>
<dbReference type="Gene3D" id="1.20.1250.10">
    <property type="match status" value="1"/>
</dbReference>
<dbReference type="InterPro" id="IPR009079">
    <property type="entry name" value="4_helix_cytokine-like_core"/>
</dbReference>
<dbReference type="InterPro" id="IPR000065">
    <property type="entry name" value="Leptin"/>
</dbReference>
<dbReference type="PANTHER" id="PTHR11724">
    <property type="entry name" value="LEPTIN"/>
    <property type="match status" value="1"/>
</dbReference>
<dbReference type="PANTHER" id="PTHR11724:SF1">
    <property type="entry name" value="LEPTIN"/>
    <property type="match status" value="1"/>
</dbReference>
<dbReference type="Pfam" id="PF02024">
    <property type="entry name" value="Leptin"/>
    <property type="match status" value="1"/>
</dbReference>
<dbReference type="PIRSF" id="PIRSF001837">
    <property type="entry name" value="Leptin"/>
    <property type="match status" value="1"/>
</dbReference>
<dbReference type="PRINTS" id="PR00495">
    <property type="entry name" value="LEPTIN"/>
</dbReference>
<dbReference type="SUPFAM" id="SSF47266">
    <property type="entry name" value="4-helical cytokines"/>
    <property type="match status" value="1"/>
</dbReference>
<sequence>VPCQIFQDDTKTLIKTIVTRINDISHTSVSAKQSVTGLDFIPGLHPILSLSKMDQTLAVYQQVLTSLPSQNVLQIANDLENLRDLLHLLAFSKSCSLPQTSGLHKPESLDGVLEALLYSTEVVALSRLQGSLQDILQQLDISPEC</sequence>
<reference key="1">
    <citation type="submission" date="1998-08" db="EMBL/GenBank/DDBJ databases">
        <title>Turkey leptin (ob) mRNA, partial cds.</title>
        <authorList>
            <person name="Ashwell C.M."/>
            <person name="Czerwinski S.M."/>
            <person name="McMurtry J.P."/>
        </authorList>
    </citation>
    <scope>NUCLEOTIDE SEQUENCE [MRNA]</scope>
    <source>
        <strain>BIG 6 ML TOM</strain>
        <tissue>Liver</tissue>
    </source>
</reference>